<sequence>MYQPSRGAARRLGPCLRAYQARPQDQSSPWALPFPPLWPHSTTTTSPSLPLFWSPPPPSPPTRLLPPAPPLPLPQVQALTSPWVVLPPGKGEEGPGPELLSGCLDGLRSLFEGPPCPCPGALIPFQAPGTAHPSPATPSGDPSMEEHLAVMYERLRQELPNLFLHSHDYTLYSSDVEFINEILNMRTKGRTWYILSLTLCRFLAWNYFAQLRLEILQLTRHPENWTLQARWRLVGLPIHLLFLRFYKRDKEELYRTYDAYSTFYLNSNGLICRHRLDKLMPSHSPPEPVKKLLVGALVALGLSEPEPNLHLCSKD</sequence>
<accession>Q32KT5</accession>
<organism>
    <name type="scientific">Bos taurus</name>
    <name type="common">Bovine</name>
    <dbReference type="NCBI Taxonomy" id="9913"/>
    <lineage>
        <taxon>Eukaryota</taxon>
        <taxon>Metazoa</taxon>
        <taxon>Chordata</taxon>
        <taxon>Craniata</taxon>
        <taxon>Vertebrata</taxon>
        <taxon>Euteleostomi</taxon>
        <taxon>Mammalia</taxon>
        <taxon>Eutheria</taxon>
        <taxon>Laurasiatheria</taxon>
        <taxon>Artiodactyla</taxon>
        <taxon>Ruminantia</taxon>
        <taxon>Pecora</taxon>
        <taxon>Bovidae</taxon>
        <taxon>Bovinae</taxon>
        <taxon>Bos</taxon>
    </lineage>
</organism>
<feature type="chain" id="PRO_0000283066" description="Uncharacterized protein C6orf136 homolog">
    <location>
        <begin position="1"/>
        <end position="315"/>
    </location>
</feature>
<name>CF136_BOVIN</name>
<protein>
    <recommendedName>
        <fullName>Uncharacterized protein C6orf136 homolog</fullName>
    </recommendedName>
</protein>
<dbReference type="EMBL" id="BC109937">
    <property type="protein sequence ID" value="AAI09938.1"/>
    <property type="molecule type" value="mRNA"/>
</dbReference>
<dbReference type="RefSeq" id="NP_001033267.1">
    <property type="nucleotide sequence ID" value="NM_001038178.2"/>
</dbReference>
<dbReference type="FunCoup" id="Q32KT5">
    <property type="interactions" value="346"/>
</dbReference>
<dbReference type="STRING" id="9913.ENSBTAP00000035760"/>
<dbReference type="PaxDb" id="9913-ENSBTAP00000035760"/>
<dbReference type="GeneID" id="538804"/>
<dbReference type="KEGG" id="bta:538804"/>
<dbReference type="CTD" id="538804"/>
<dbReference type="eggNOG" id="KOG4457">
    <property type="taxonomic scope" value="Eukaryota"/>
</dbReference>
<dbReference type="InParanoid" id="Q32KT5"/>
<dbReference type="OrthoDB" id="44820at2759"/>
<dbReference type="Proteomes" id="UP000009136">
    <property type="component" value="Unplaced"/>
</dbReference>
<dbReference type="InterPro" id="IPR018790">
    <property type="entry name" value="DUF2358"/>
</dbReference>
<dbReference type="PANTHER" id="PTHR31094">
    <property type="entry name" value="RIKEN CDNA 2310061I04 GENE"/>
    <property type="match status" value="1"/>
</dbReference>
<dbReference type="PANTHER" id="PTHR31094:SF2">
    <property type="entry name" value="RIKEN CDNA 2310061I04 GENE"/>
    <property type="match status" value="1"/>
</dbReference>
<dbReference type="Pfam" id="PF10184">
    <property type="entry name" value="DUF2358"/>
    <property type="match status" value="1"/>
</dbReference>
<proteinExistence type="evidence at transcript level"/>
<keyword id="KW-1185">Reference proteome</keyword>
<reference key="1">
    <citation type="submission" date="2005-11" db="EMBL/GenBank/DDBJ databases">
        <authorList>
            <consortium name="NIH - Mammalian Gene Collection (MGC) project"/>
        </authorList>
    </citation>
    <scope>NUCLEOTIDE SEQUENCE [LARGE SCALE MRNA]</scope>
    <source>
        <strain>Crossbred X Angus</strain>
        <tissue>Liver</tissue>
    </source>
</reference>